<keyword id="KW-0067">ATP-binding</keyword>
<keyword id="KW-0436">Ligase</keyword>
<keyword id="KW-0547">Nucleotide-binding</keyword>
<keyword id="KW-0554">One-carbon metabolism</keyword>
<keyword id="KW-1185">Reference proteome</keyword>
<feature type="chain" id="PRO_0000300533" description="Formate--tetrahydrofolate ligase">
    <location>
        <begin position="1"/>
        <end position="555"/>
    </location>
</feature>
<feature type="binding site" evidence="1">
    <location>
        <begin position="64"/>
        <end position="71"/>
    </location>
    <ligand>
        <name>ATP</name>
        <dbReference type="ChEBI" id="CHEBI:30616"/>
    </ligand>
</feature>
<organism>
    <name type="scientific">Parabacteroides distasonis (strain ATCC 8503 / DSM 20701 / CIP 104284 / JCM 5825 / NCTC 11152)</name>
    <dbReference type="NCBI Taxonomy" id="435591"/>
    <lineage>
        <taxon>Bacteria</taxon>
        <taxon>Pseudomonadati</taxon>
        <taxon>Bacteroidota</taxon>
        <taxon>Bacteroidia</taxon>
        <taxon>Bacteroidales</taxon>
        <taxon>Tannerellaceae</taxon>
        <taxon>Parabacteroides</taxon>
    </lineage>
</organism>
<name>FTHS_PARD8</name>
<evidence type="ECO:0000255" key="1">
    <source>
        <dbReference type="HAMAP-Rule" id="MF_01543"/>
    </source>
</evidence>
<accession>A6LAR6</accession>
<sequence>MKSDIEIARETDLRKIKEVATTLGIPREEVQNYGRYIAKVPIHLIDKKQMDQHNLILVTAITPTKAGIGKTTVSIGLALGLNKIGKKAVVALREPSLGPCFGMKGGAAGGGYAQVLPMENINLHFTGDFHAVTSAHNMITALLDNYIYQTRNTCEGLKEIKWKRVLDVNDRSLRNIVSGLGGSANGVPTETGFDITPASEIMAILCLATDIEDLKRRVGNILLGYTNEDKPFTVNDLGIAGAITVLLKDALLPNLVQTTENTPAFVHGGPFANIAHGCNSISATQMALTYGDYVITEAGFGADLGAEKFFNIKCRKAGLSPKLTVIVATAQSLKLHGGVPEKEIKEPNIEGLKNGFANLDKHIENMKSFGQQVIVTFNRFATDTDEEIALVAEHCEEKGVGFAMNNVFAEGGEGGTELARLVVDTIENHPSAPLQYTYDLNDPIRTKVQKVAQKIYGASSIVYTTLADKKLRQIESLGISHYPICIAKTQYSFSSDPKAYGVAKDFELKVRDVIINNGAEMIVVVMGEIMRMPGLPKEPQARKIDIVDGMIEGLS</sequence>
<comment type="catalytic activity">
    <reaction evidence="1">
        <text>(6S)-5,6,7,8-tetrahydrofolate + formate + ATP = (6R)-10-formyltetrahydrofolate + ADP + phosphate</text>
        <dbReference type="Rhea" id="RHEA:20221"/>
        <dbReference type="ChEBI" id="CHEBI:15740"/>
        <dbReference type="ChEBI" id="CHEBI:30616"/>
        <dbReference type="ChEBI" id="CHEBI:43474"/>
        <dbReference type="ChEBI" id="CHEBI:57453"/>
        <dbReference type="ChEBI" id="CHEBI:195366"/>
        <dbReference type="ChEBI" id="CHEBI:456216"/>
        <dbReference type="EC" id="6.3.4.3"/>
    </reaction>
</comment>
<comment type="pathway">
    <text evidence="1">One-carbon metabolism; tetrahydrofolate interconversion.</text>
</comment>
<comment type="similarity">
    <text evidence="1">Belongs to the formate--tetrahydrofolate ligase family.</text>
</comment>
<proteinExistence type="inferred from homology"/>
<reference key="1">
    <citation type="journal article" date="2007" name="PLoS Biol.">
        <title>Evolution of symbiotic bacteria in the distal human intestine.</title>
        <authorList>
            <person name="Xu J."/>
            <person name="Mahowald M.A."/>
            <person name="Ley R.E."/>
            <person name="Lozupone C.A."/>
            <person name="Hamady M."/>
            <person name="Martens E.C."/>
            <person name="Henrissat B."/>
            <person name="Coutinho P.M."/>
            <person name="Minx P."/>
            <person name="Latreille P."/>
            <person name="Cordum H."/>
            <person name="Van Brunt A."/>
            <person name="Kim K."/>
            <person name="Fulton R.S."/>
            <person name="Fulton L.A."/>
            <person name="Clifton S.W."/>
            <person name="Wilson R.K."/>
            <person name="Knight R.D."/>
            <person name="Gordon J.I."/>
        </authorList>
    </citation>
    <scope>NUCLEOTIDE SEQUENCE [LARGE SCALE GENOMIC DNA]</scope>
    <source>
        <strain>ATCC 8503 / DSM 20701 / CIP 104284 / JCM 5825 / NCTC 11152</strain>
    </source>
</reference>
<protein>
    <recommendedName>
        <fullName evidence="1">Formate--tetrahydrofolate ligase</fullName>
        <ecNumber evidence="1">6.3.4.3</ecNumber>
    </recommendedName>
    <alternativeName>
        <fullName evidence="1">Formyltetrahydrofolate synthetase</fullName>
        <shortName evidence="1">FHS</shortName>
        <shortName evidence="1">FTHFS</shortName>
    </alternativeName>
</protein>
<dbReference type="EC" id="6.3.4.3" evidence="1"/>
<dbReference type="EMBL" id="CP000140">
    <property type="protein sequence ID" value="ABR42780.1"/>
    <property type="molecule type" value="Genomic_DNA"/>
</dbReference>
<dbReference type="RefSeq" id="WP_005857104.1">
    <property type="nucleotide sequence ID" value="NZ_LR215978.1"/>
</dbReference>
<dbReference type="SMR" id="A6LAR6"/>
<dbReference type="STRING" id="435591.BDI_1014"/>
<dbReference type="PaxDb" id="435591-BDI_1014"/>
<dbReference type="KEGG" id="pdi:BDI_1014"/>
<dbReference type="eggNOG" id="COG2759">
    <property type="taxonomic scope" value="Bacteria"/>
</dbReference>
<dbReference type="HOGENOM" id="CLU_003601_3_3_10"/>
<dbReference type="BioCyc" id="PDIS435591:G1G5A-1047-MONOMER"/>
<dbReference type="UniPathway" id="UPA00193"/>
<dbReference type="Proteomes" id="UP000000566">
    <property type="component" value="Chromosome"/>
</dbReference>
<dbReference type="GO" id="GO:0005524">
    <property type="term" value="F:ATP binding"/>
    <property type="evidence" value="ECO:0007669"/>
    <property type="project" value="UniProtKB-UniRule"/>
</dbReference>
<dbReference type="GO" id="GO:0004329">
    <property type="term" value="F:formate-tetrahydrofolate ligase activity"/>
    <property type="evidence" value="ECO:0007669"/>
    <property type="project" value="UniProtKB-UniRule"/>
</dbReference>
<dbReference type="GO" id="GO:0035999">
    <property type="term" value="P:tetrahydrofolate interconversion"/>
    <property type="evidence" value="ECO:0007669"/>
    <property type="project" value="UniProtKB-UniRule"/>
</dbReference>
<dbReference type="CDD" id="cd00477">
    <property type="entry name" value="FTHFS"/>
    <property type="match status" value="1"/>
</dbReference>
<dbReference type="FunFam" id="3.30.1510.10:FF:000001">
    <property type="entry name" value="Formate--tetrahydrofolate ligase"/>
    <property type="match status" value="1"/>
</dbReference>
<dbReference type="Gene3D" id="3.30.1510.10">
    <property type="entry name" value="Domain 2, N(10)-formyltetrahydrofolate synthetase"/>
    <property type="match status" value="1"/>
</dbReference>
<dbReference type="Gene3D" id="3.10.410.10">
    <property type="entry name" value="Formyltetrahydrofolate synthetase, domain 3"/>
    <property type="match status" value="1"/>
</dbReference>
<dbReference type="Gene3D" id="3.40.50.300">
    <property type="entry name" value="P-loop containing nucleotide triphosphate hydrolases"/>
    <property type="match status" value="1"/>
</dbReference>
<dbReference type="HAMAP" id="MF_01543">
    <property type="entry name" value="FTHFS"/>
    <property type="match status" value="1"/>
</dbReference>
<dbReference type="InterPro" id="IPR000559">
    <property type="entry name" value="Formate_THF_ligase"/>
</dbReference>
<dbReference type="InterPro" id="IPR020628">
    <property type="entry name" value="Formate_THF_ligase_CS"/>
</dbReference>
<dbReference type="InterPro" id="IPR027417">
    <property type="entry name" value="P-loop_NTPase"/>
</dbReference>
<dbReference type="NCBIfam" id="NF010030">
    <property type="entry name" value="PRK13505.1"/>
    <property type="match status" value="1"/>
</dbReference>
<dbReference type="Pfam" id="PF01268">
    <property type="entry name" value="FTHFS"/>
    <property type="match status" value="1"/>
</dbReference>
<dbReference type="SUPFAM" id="SSF52540">
    <property type="entry name" value="P-loop containing nucleoside triphosphate hydrolases"/>
    <property type="match status" value="1"/>
</dbReference>
<dbReference type="PROSITE" id="PS00721">
    <property type="entry name" value="FTHFS_1"/>
    <property type="match status" value="1"/>
</dbReference>
<dbReference type="PROSITE" id="PS00722">
    <property type="entry name" value="FTHFS_2"/>
    <property type="match status" value="1"/>
</dbReference>
<gene>
    <name evidence="1" type="primary">fhs</name>
    <name type="ordered locus">BDI_1014</name>
</gene>